<evidence type="ECO:0000255" key="1"/>
<evidence type="ECO:0000255" key="2">
    <source>
        <dbReference type="PROSITE-ProRule" id="PRU00084"/>
    </source>
</evidence>
<evidence type="ECO:0000255" key="3">
    <source>
        <dbReference type="PROSITE-ProRule" id="PRU00159"/>
    </source>
</evidence>
<evidence type="ECO:0000256" key="4">
    <source>
        <dbReference type="SAM" id="MobiDB-lite"/>
    </source>
</evidence>
<evidence type="ECO:0000269" key="5">
    <source>
    </source>
</evidence>
<evidence type="ECO:0000305" key="6"/>
<evidence type="ECO:0000312" key="7">
    <source>
        <dbReference type="Proteomes" id="UP000001940"/>
    </source>
</evidence>
<evidence type="ECO:0000312" key="8">
    <source>
        <dbReference type="WormBase" id="C30F8.4a"/>
    </source>
</evidence>
<evidence type="ECO:0000312" key="9">
    <source>
        <dbReference type="WormBase" id="C30F8.4b"/>
    </source>
</evidence>
<gene>
    <name evidence="8" type="primary">kin-32</name>
    <name evidence="8" type="ORF">C30F8.4</name>
</gene>
<accession>Q95YD4</accession>
<accession>Q8T879</accession>
<sequence length="867" mass="97999">MEGLARVFLIGGASKAVRYDEQTTIERVIHVVARGIGISQVAVAHFALRLVTGPSPQTAGSGDSLWLHPMLRITQLPHIYARHLPIGVCDEIKLEMRMRFMPQSVYELQATDSSAFVYLHEQVVDEFFSHVAWRSSVEVALEVAALKVCRDFAEHQHNKGADHHLEDLDIEACIQSLIPNVLHNPGFKHSHLKKTFTAYIKKFSATSPNESIIRSLALLLEVVKFDVELFKASLGAGWTKPVELVVGPHTGLSYRLNERCDSSRLLELRTIAEITIRKMENGSEKTLMQLNLSGAAKPVLITLSTEELSQSLAHLLDGYQMLYNQRDSVFKLKGIERCETLTMHEATIRPKTPNNIDSNIRLRRELITLKELIGGGQFGNVYKAVYHDLEKDERIAVAVKVCKTDAEPADTQLILQESSLMRNFRHSNIIQLIGVCVDQPMWLVLELAPKGELREYLQQEKDWLPLRILTLFCSQICDSLVYLHSTRFVHRDIAARNILVCSPQCVKLADFGLSRALDYDAVYTASRGKLPIKWLAPESVNYRQFSMASDVWMFGVCMWEIFSLGVKPWAGVTNSDVIMHIEQGSRPPCPEKCPTALYNFIRSKMWAIEPHKRPTVDQIYAIIEDVRQQIIQNIPPEQIIVGKPMTAAGVIVAEMSSLPGLTLYRTMEDQKRQAEEDAKWLEQEDDEDEDDQDIDQIPSTSHSSVENIRTSNGYLHHTPTSTRSLRFEDKTSRGLRRSVDGVCDAVTKLQNSFNNLTHNDDFLHSVKEVTSQLREMLIVASGMRDRVTTTTQRTDVDMTKTLIANDMKQMSRVMGKLQVNGHQATYNTLRRDVVRICGELAVNCTTLQLQLTQPPLENEFSSLLSNC</sequence>
<organism evidence="7">
    <name type="scientific">Caenorhabditis elegans</name>
    <dbReference type="NCBI Taxonomy" id="6239"/>
    <lineage>
        <taxon>Eukaryota</taxon>
        <taxon>Metazoa</taxon>
        <taxon>Ecdysozoa</taxon>
        <taxon>Nematoda</taxon>
        <taxon>Chromadorea</taxon>
        <taxon>Rhabditida</taxon>
        <taxon>Rhabditina</taxon>
        <taxon>Rhabditomorpha</taxon>
        <taxon>Rhabditoidea</taxon>
        <taxon>Rhabditidae</taxon>
        <taxon>Peloderinae</taxon>
        <taxon>Caenorhabditis</taxon>
    </lineage>
</organism>
<proteinExistence type="evidence at protein level"/>
<comment type="function">
    <text evidence="5">Has apparently no tyrosine kinase activity in vitro when expressed in mammalian cells.</text>
</comment>
<comment type="alternative products">
    <event type="alternative splicing"/>
    <isoform>
        <id>Q95YD4-1</id>
        <name evidence="8">a</name>
        <sequence type="displayed"/>
    </isoform>
    <isoform>
        <id>Q95YD4-2</id>
        <name evidence="9">b</name>
        <sequence type="described" ref="VSP_057893"/>
    </isoform>
</comment>
<comment type="tissue specificity">
    <text evidence="5">Expressed in body wall muscles and some neurons in the head.</text>
</comment>
<comment type="disruption phenotype">
    <text evidence="5">RNAi-mediated knockdown causes no obvious phenotype.</text>
</comment>
<comment type="similarity">
    <text evidence="6">Belongs to the protein kinase superfamily. Tyr protein kinase family. FAK subfamily.</text>
</comment>
<feature type="chain" id="PRO_0000434040" description="Inactive tyrosine-protein kinase kin-32">
    <location>
        <begin position="1"/>
        <end position="867"/>
    </location>
</feature>
<feature type="domain" description="FERM" evidence="2">
    <location>
        <begin position="3"/>
        <end position="327"/>
    </location>
</feature>
<feature type="domain" description="Protein kinase" evidence="3">
    <location>
        <begin position="367"/>
        <end position="631"/>
    </location>
</feature>
<feature type="region of interest" description="Disordered" evidence="4">
    <location>
        <begin position="674"/>
        <end position="729"/>
    </location>
</feature>
<feature type="coiled-coil region" evidence="1">
    <location>
        <begin position="662"/>
        <end position="691"/>
    </location>
</feature>
<feature type="compositionally biased region" description="Acidic residues" evidence="4">
    <location>
        <begin position="683"/>
        <end position="694"/>
    </location>
</feature>
<feature type="compositionally biased region" description="Polar residues" evidence="4">
    <location>
        <begin position="698"/>
        <end position="724"/>
    </location>
</feature>
<feature type="binding site" evidence="3">
    <location>
        <begin position="373"/>
        <end position="381"/>
    </location>
    <ligand>
        <name>ATP</name>
        <dbReference type="ChEBI" id="CHEBI:30616"/>
    </ligand>
</feature>
<feature type="binding site" evidence="3">
    <location>
        <position position="400"/>
    </location>
    <ligand>
        <name>ATP</name>
        <dbReference type="ChEBI" id="CHEBI:30616"/>
    </ligand>
</feature>
<feature type="splice variant" id="VSP_057893" description="In isoform b." evidence="6">
    <location>
        <begin position="1"/>
        <end position="69"/>
    </location>
</feature>
<dbReference type="EMBL" id="BX284601">
    <property type="protein sequence ID" value="CCD66186.1"/>
    <property type="molecule type" value="Genomic_DNA"/>
</dbReference>
<dbReference type="EMBL" id="BX284601">
    <property type="protein sequence ID" value="CCD66187.1"/>
    <property type="molecule type" value="Genomic_DNA"/>
</dbReference>
<dbReference type="RefSeq" id="NP_740841.1">
    <molecule id="Q95YD4-1"/>
    <property type="nucleotide sequence ID" value="NM_170854.6"/>
</dbReference>
<dbReference type="RefSeq" id="NP_740842.1">
    <molecule id="Q95YD4-2"/>
    <property type="nucleotide sequence ID" value="NM_170855.6"/>
</dbReference>
<dbReference type="SMR" id="Q95YD4"/>
<dbReference type="FunCoup" id="Q95YD4">
    <property type="interactions" value="1085"/>
</dbReference>
<dbReference type="STRING" id="6239.C30F8.4a.1"/>
<dbReference type="PaxDb" id="6239-C30F8.4a"/>
<dbReference type="EnsemblMetazoa" id="C30F8.4a.1">
    <molecule id="Q95YD4-1"/>
    <property type="protein sequence ID" value="C30F8.4a.1"/>
    <property type="gene ID" value="WBGene00002213"/>
</dbReference>
<dbReference type="EnsemblMetazoa" id="C30F8.4b.1">
    <molecule id="Q95YD4-2"/>
    <property type="protein sequence ID" value="C30F8.4b.1"/>
    <property type="gene ID" value="WBGene00002213"/>
</dbReference>
<dbReference type="EnsemblMetazoa" id="C30F8.4b.2">
    <molecule id="Q95YD4-2"/>
    <property type="protein sequence ID" value="C30F8.4b.2"/>
    <property type="gene ID" value="WBGene00002213"/>
</dbReference>
<dbReference type="GeneID" id="172135"/>
<dbReference type="KEGG" id="cel:CELE_C30F8.4"/>
<dbReference type="UCSC" id="C30F8.4a.1">
    <property type="organism name" value="c. elegans"/>
</dbReference>
<dbReference type="AGR" id="WB:WBGene00002213"/>
<dbReference type="CTD" id="172135"/>
<dbReference type="WormBase" id="C30F8.4a">
    <molecule id="Q95YD4-1"/>
    <property type="protein sequence ID" value="CE25798"/>
    <property type="gene ID" value="WBGene00002213"/>
    <property type="gene designation" value="kin-32"/>
</dbReference>
<dbReference type="WormBase" id="C30F8.4b">
    <molecule id="Q95YD4-2"/>
    <property type="protein sequence ID" value="CE30493"/>
    <property type="gene ID" value="WBGene00002213"/>
    <property type="gene designation" value="kin-32"/>
</dbReference>
<dbReference type="eggNOG" id="KOG4257">
    <property type="taxonomic scope" value="Eukaryota"/>
</dbReference>
<dbReference type="GeneTree" id="ENSGT00940000168088"/>
<dbReference type="HOGENOM" id="CLU_002646_1_0_1"/>
<dbReference type="InParanoid" id="Q95YD4"/>
<dbReference type="OMA" id="RYDEQTT"/>
<dbReference type="OrthoDB" id="9976756at2759"/>
<dbReference type="PhylomeDB" id="Q95YD4"/>
<dbReference type="Reactome" id="R-CEL-2029482">
    <property type="pathway name" value="Regulation of actin dynamics for phagocytic cup formation"/>
</dbReference>
<dbReference type="Reactome" id="R-CEL-354192">
    <property type="pathway name" value="Integrin signaling"/>
</dbReference>
<dbReference type="Reactome" id="R-CEL-354194">
    <property type="pathway name" value="GRB2:SOS provides linkage to MAPK signaling for Integrins"/>
</dbReference>
<dbReference type="Reactome" id="R-CEL-375165">
    <property type="pathway name" value="NCAM signaling for neurite out-growth"/>
</dbReference>
<dbReference type="Reactome" id="R-CEL-3928662">
    <property type="pathway name" value="EPHB-mediated forward signaling"/>
</dbReference>
<dbReference type="Reactome" id="R-CEL-418885">
    <property type="pathway name" value="DCC mediated attractive signaling"/>
</dbReference>
<dbReference type="Reactome" id="R-CEL-4420097">
    <property type="pathway name" value="VEGFA-VEGFR2 Pathway"/>
</dbReference>
<dbReference type="Reactome" id="R-CEL-5663213">
    <property type="pathway name" value="RHO GTPases Activate WASPs and WAVEs"/>
</dbReference>
<dbReference type="Reactome" id="R-CEL-5673001">
    <property type="pathway name" value="RAF/MAP kinase cascade"/>
</dbReference>
<dbReference type="Reactome" id="R-CEL-8874081">
    <property type="pathway name" value="MET activates PTK2 signaling"/>
</dbReference>
<dbReference type="Reactome" id="R-CEL-9009391">
    <property type="pathway name" value="Extra-nuclear estrogen signaling"/>
</dbReference>
<dbReference type="Reactome" id="R-CEL-9013420">
    <property type="pathway name" value="RHOU GTPase cycle"/>
</dbReference>
<dbReference type="Reactome" id="R-CEL-9860927">
    <property type="pathway name" value="Turbulent (oscillatory, disturbed) flow shear stress activates signaling by PIEZO1 and integrins in endothelial cells"/>
</dbReference>
<dbReference type="PRO" id="PR:Q95YD4"/>
<dbReference type="Proteomes" id="UP000001940">
    <property type="component" value="Chromosome I"/>
</dbReference>
<dbReference type="Bgee" id="WBGene00002213">
    <property type="expression patterns" value="Expressed in pharyngeal muscle cell (C elegans) and 3 other cell types or tissues"/>
</dbReference>
<dbReference type="GO" id="GO:0005856">
    <property type="term" value="C:cytoskeleton"/>
    <property type="evidence" value="ECO:0007669"/>
    <property type="project" value="InterPro"/>
</dbReference>
<dbReference type="GO" id="GO:0005925">
    <property type="term" value="C:focal adhesion"/>
    <property type="evidence" value="ECO:0000318"/>
    <property type="project" value="GO_Central"/>
</dbReference>
<dbReference type="GO" id="GO:0005886">
    <property type="term" value="C:plasma membrane"/>
    <property type="evidence" value="ECO:0000318"/>
    <property type="project" value="GO_Central"/>
</dbReference>
<dbReference type="GO" id="GO:0005524">
    <property type="term" value="F:ATP binding"/>
    <property type="evidence" value="ECO:0007669"/>
    <property type="project" value="UniProtKB-KW"/>
</dbReference>
<dbReference type="GO" id="GO:0004713">
    <property type="term" value="F:protein tyrosine kinase activity"/>
    <property type="evidence" value="ECO:0007669"/>
    <property type="project" value="InterPro"/>
</dbReference>
<dbReference type="GO" id="GO:0051128">
    <property type="term" value="P:regulation of cellular component organization"/>
    <property type="evidence" value="ECO:0007669"/>
    <property type="project" value="UniProtKB-ARBA"/>
</dbReference>
<dbReference type="GO" id="GO:0007172">
    <property type="term" value="P:signal complex assembly"/>
    <property type="evidence" value="ECO:0007669"/>
    <property type="project" value="InterPro"/>
</dbReference>
<dbReference type="CDD" id="cd13190">
    <property type="entry name" value="FERM_C_FAK1"/>
    <property type="match status" value="1"/>
</dbReference>
<dbReference type="FunFam" id="1.10.510.10:FF:001699">
    <property type="entry name" value="Inactive tyrosine-protein kinase kin-32"/>
    <property type="match status" value="1"/>
</dbReference>
<dbReference type="FunFam" id="1.20.120.330:FF:000024">
    <property type="entry name" value="Inactive tyrosine-protein kinase kin-32"/>
    <property type="match status" value="1"/>
</dbReference>
<dbReference type="Gene3D" id="1.20.80.10">
    <property type="match status" value="1"/>
</dbReference>
<dbReference type="Gene3D" id="1.20.120.330">
    <property type="entry name" value="Nucleotidyltransferases domain 2"/>
    <property type="match status" value="1"/>
</dbReference>
<dbReference type="Gene3D" id="3.10.20.90">
    <property type="entry name" value="Phosphatidylinositol 3-kinase Catalytic Subunit, Chain A, domain 1"/>
    <property type="match status" value="1"/>
</dbReference>
<dbReference type="Gene3D" id="3.30.200.20">
    <property type="entry name" value="Phosphorylase Kinase, domain 1"/>
    <property type="match status" value="1"/>
</dbReference>
<dbReference type="Gene3D" id="2.30.29.30">
    <property type="entry name" value="Pleckstrin-homology domain (PH domain)/Phosphotyrosine-binding domain (PTB)"/>
    <property type="match status" value="1"/>
</dbReference>
<dbReference type="Gene3D" id="1.10.510.10">
    <property type="entry name" value="Transferase(Phosphotransferase) domain 1"/>
    <property type="match status" value="1"/>
</dbReference>
<dbReference type="InterPro" id="IPR019749">
    <property type="entry name" value="Band_41_domain"/>
</dbReference>
<dbReference type="InterPro" id="IPR049385">
    <property type="entry name" value="FAK1-like_FERM_C"/>
</dbReference>
<dbReference type="InterPro" id="IPR041784">
    <property type="entry name" value="FAK1/PYK2_FERM_C"/>
</dbReference>
<dbReference type="InterPro" id="IPR014352">
    <property type="entry name" value="FERM/acyl-CoA-bd_prot_sf"/>
</dbReference>
<dbReference type="InterPro" id="IPR035963">
    <property type="entry name" value="FERM_2"/>
</dbReference>
<dbReference type="InterPro" id="IPR000299">
    <property type="entry name" value="FERM_domain"/>
</dbReference>
<dbReference type="InterPro" id="IPR036137">
    <property type="entry name" value="Focal_adhe_kin_target_dom_sf"/>
</dbReference>
<dbReference type="InterPro" id="IPR005189">
    <property type="entry name" value="Focal_adhesion_kin_target_dom"/>
</dbReference>
<dbReference type="InterPro" id="IPR011009">
    <property type="entry name" value="Kinase-like_dom_sf"/>
</dbReference>
<dbReference type="InterPro" id="IPR050198">
    <property type="entry name" value="Non-receptor_tyrosine_kinases"/>
</dbReference>
<dbReference type="InterPro" id="IPR011993">
    <property type="entry name" value="PH-like_dom_sf"/>
</dbReference>
<dbReference type="InterPro" id="IPR000719">
    <property type="entry name" value="Prot_kinase_dom"/>
</dbReference>
<dbReference type="InterPro" id="IPR017441">
    <property type="entry name" value="Protein_kinase_ATP_BS"/>
</dbReference>
<dbReference type="InterPro" id="IPR001245">
    <property type="entry name" value="Ser-Thr/Tyr_kinase_cat_dom"/>
</dbReference>
<dbReference type="InterPro" id="IPR008266">
    <property type="entry name" value="Tyr_kinase_AS"/>
</dbReference>
<dbReference type="InterPro" id="IPR020635">
    <property type="entry name" value="Tyr_kinase_cat_dom"/>
</dbReference>
<dbReference type="InterPro" id="IPR029071">
    <property type="entry name" value="Ubiquitin-like_domsf"/>
</dbReference>
<dbReference type="PANTHER" id="PTHR24418">
    <property type="entry name" value="TYROSINE-PROTEIN KINASE"/>
    <property type="match status" value="1"/>
</dbReference>
<dbReference type="Pfam" id="PF21477">
    <property type="entry name" value="FERM_C_FAK1"/>
    <property type="match status" value="1"/>
</dbReference>
<dbReference type="Pfam" id="PF03623">
    <property type="entry name" value="Focal_AT"/>
    <property type="match status" value="1"/>
</dbReference>
<dbReference type="Pfam" id="PF07714">
    <property type="entry name" value="PK_Tyr_Ser-Thr"/>
    <property type="match status" value="1"/>
</dbReference>
<dbReference type="PRINTS" id="PR00109">
    <property type="entry name" value="TYRKINASE"/>
</dbReference>
<dbReference type="SMART" id="SM00295">
    <property type="entry name" value="B41"/>
    <property type="match status" value="1"/>
</dbReference>
<dbReference type="SMART" id="SM00219">
    <property type="entry name" value="TyrKc"/>
    <property type="match status" value="1"/>
</dbReference>
<dbReference type="SUPFAM" id="SSF68993">
    <property type="entry name" value="FAT domain of focal adhesion kinase"/>
    <property type="match status" value="1"/>
</dbReference>
<dbReference type="SUPFAM" id="SSF50729">
    <property type="entry name" value="PH domain-like"/>
    <property type="match status" value="1"/>
</dbReference>
<dbReference type="SUPFAM" id="SSF56112">
    <property type="entry name" value="Protein kinase-like (PK-like)"/>
    <property type="match status" value="1"/>
</dbReference>
<dbReference type="SUPFAM" id="SSF47031">
    <property type="entry name" value="Second domain of FERM"/>
    <property type="match status" value="1"/>
</dbReference>
<dbReference type="SUPFAM" id="SSF54236">
    <property type="entry name" value="Ubiquitin-like"/>
    <property type="match status" value="1"/>
</dbReference>
<dbReference type="PROSITE" id="PS50057">
    <property type="entry name" value="FERM_3"/>
    <property type="match status" value="1"/>
</dbReference>
<dbReference type="PROSITE" id="PS00107">
    <property type="entry name" value="PROTEIN_KINASE_ATP"/>
    <property type="match status" value="1"/>
</dbReference>
<dbReference type="PROSITE" id="PS50011">
    <property type="entry name" value="PROTEIN_KINASE_DOM"/>
    <property type="match status" value="1"/>
</dbReference>
<dbReference type="PROSITE" id="PS00109">
    <property type="entry name" value="PROTEIN_KINASE_TYR"/>
    <property type="match status" value="1"/>
</dbReference>
<reference evidence="7" key="1">
    <citation type="journal article" date="1998" name="Science">
        <title>Genome sequence of the nematode C. elegans: a platform for investigating biology.</title>
        <authorList>
            <consortium name="The C. elegans sequencing consortium"/>
        </authorList>
    </citation>
    <scope>NUCLEOTIDE SEQUENCE [LARGE SCALE GENOMIC DNA]</scope>
    <source>
        <strain evidence="7">Bristol N2</strain>
    </source>
</reference>
<reference evidence="6" key="2">
    <citation type="journal article" date="2008" name="Dev. Dyn.">
        <title>Functional characterization of KIN-32, the Caenorhabditis elegans homolog of focal adhesion kinase.</title>
        <authorList>
            <person name="Cram E.J."/>
            <person name="Fontanez K.M."/>
            <person name="Schwarzbauer J.E."/>
        </authorList>
    </citation>
    <scope>TISSUE SPECIFICITY</scope>
    <scope>FUNCTION</scope>
    <scope>LACK OF CATALYTIC ACTIVITY</scope>
    <scope>DISRUPTION PHENOTYPE</scope>
</reference>
<protein>
    <recommendedName>
        <fullName evidence="6">Inactive tyrosine-protein kinase kin-32</fullName>
    </recommendedName>
</protein>
<name>KIN32_CAEEL</name>
<keyword id="KW-0025">Alternative splicing</keyword>
<keyword id="KW-0067">ATP-binding</keyword>
<keyword id="KW-0175">Coiled coil</keyword>
<keyword id="KW-0547">Nucleotide-binding</keyword>
<keyword id="KW-1185">Reference proteome</keyword>